<organism>
    <name type="scientific">Nandina domestica</name>
    <name type="common">Heavenly bamboo</name>
    <dbReference type="NCBI Taxonomy" id="41776"/>
    <lineage>
        <taxon>Eukaryota</taxon>
        <taxon>Viridiplantae</taxon>
        <taxon>Streptophyta</taxon>
        <taxon>Embryophyta</taxon>
        <taxon>Tracheophyta</taxon>
        <taxon>Spermatophyta</taxon>
        <taxon>Magnoliopsida</taxon>
        <taxon>Ranunculales</taxon>
        <taxon>Berberidaceae</taxon>
        <taxon>Nandinoideae</taxon>
        <taxon>Nandineae</taxon>
        <taxon>Nandina</taxon>
    </lineage>
</organism>
<name>YCF15_NANDO</name>
<geneLocation type="chloroplast"/>
<reference key="1">
    <citation type="journal article" date="2006" name="BMC Plant Biol.">
        <title>Rapid and accurate pyrosequencing of angiosperm plastid genomes.</title>
        <authorList>
            <person name="Moore M.J."/>
            <person name="Dhingra A."/>
            <person name="Soltis P.S."/>
            <person name="Shaw R."/>
            <person name="Farmerie W.G."/>
            <person name="Folta K.M."/>
            <person name="Soltis D.E."/>
        </authorList>
    </citation>
    <scope>NUCLEOTIDE SEQUENCE [LARGE SCALE GENOMIC DNA]</scope>
</reference>
<evidence type="ECO:0000305" key="1"/>
<proteinExistence type="uncertain"/>
<gene>
    <name type="primary">ycf15-A</name>
</gene>
<gene>
    <name type="primary">ycf15-B</name>
</gene>
<keyword id="KW-0150">Chloroplast</keyword>
<keyword id="KW-0934">Plastid</keyword>
<dbReference type="EMBL" id="DQ923117">
    <property type="protein sequence ID" value="ABI49909.1"/>
    <property type="molecule type" value="Genomic_DNA"/>
</dbReference>
<dbReference type="EMBL" id="DQ923117">
    <property type="protein sequence ID" value="ABI49926.1"/>
    <property type="molecule type" value="Genomic_DNA"/>
</dbReference>
<dbReference type="GO" id="GO:0009507">
    <property type="term" value="C:chloroplast"/>
    <property type="evidence" value="ECO:0007669"/>
    <property type="project" value="UniProtKB-SubCell"/>
</dbReference>
<dbReference type="InterPro" id="IPR019645">
    <property type="entry name" value="Uncharacterised_Ycf15"/>
</dbReference>
<dbReference type="Pfam" id="PF10705">
    <property type="entry name" value="Ycf15"/>
    <property type="match status" value="1"/>
</dbReference>
<comment type="subcellular location">
    <subcellularLocation>
        <location>Plastid</location>
        <location>Chloroplast</location>
    </subcellularLocation>
</comment>
<comment type="similarity">
    <text evidence="1">Belongs to the ycf15 family.</text>
</comment>
<comment type="caution">
    <text evidence="1">Could be the product of a pseudogene.</text>
</comment>
<sequence>METLVSSIFWTLAPWNNMLLLKHGRIEILDQNTMYGWYELPKQEFLNGEQLEPITHYIKKFPLMKHVNPLENKKYACPMKWLLLSAPITNHWFH</sequence>
<accession>Q09FP9</accession>
<protein>
    <recommendedName>
        <fullName>Putative uncharacterized protein ycf15</fullName>
    </recommendedName>
</protein>
<feature type="chain" id="PRO_0000360389" description="Putative uncharacterized protein ycf15">
    <location>
        <begin position="1"/>
        <end position="94"/>
    </location>
</feature>